<sequence>MEDRVEISMLMDFYSSLLTEKQRSVMALYYDDDLSLAEIAELNKTSRQAIHDLIKRCDKQLLSYESKLNLLQKSMRKEKYIMNFLEELKEKYSVSDKDYLMFKEKLENL</sequence>
<reference key="1">
    <citation type="submission" date="2008-04" db="EMBL/GenBank/DDBJ databases">
        <title>Complete sequence of Clostridium botulinum strain Eklund.</title>
        <authorList>
            <person name="Brinkac L.M."/>
            <person name="Brown J.L."/>
            <person name="Bruce D."/>
            <person name="Detter C."/>
            <person name="Munk C."/>
            <person name="Smith L.A."/>
            <person name="Smith T.J."/>
            <person name="Sutton G."/>
            <person name="Brettin T.S."/>
        </authorList>
    </citation>
    <scope>NUCLEOTIDE SEQUENCE [LARGE SCALE GENOMIC DNA]</scope>
    <source>
        <strain>Eklund 17B / Type B</strain>
    </source>
</reference>
<name>Y1244_CLOBB</name>
<organism>
    <name type="scientific">Clostridium botulinum (strain Eklund 17B / Type B)</name>
    <dbReference type="NCBI Taxonomy" id="935198"/>
    <lineage>
        <taxon>Bacteria</taxon>
        <taxon>Bacillati</taxon>
        <taxon>Bacillota</taxon>
        <taxon>Clostridia</taxon>
        <taxon>Eubacteriales</taxon>
        <taxon>Clostridiaceae</taxon>
        <taxon>Clostridium</taxon>
    </lineage>
</organism>
<proteinExistence type="inferred from homology"/>
<protein>
    <recommendedName>
        <fullName evidence="1">UPF0122 protein CLL_A1244</fullName>
    </recommendedName>
</protein>
<dbReference type="EMBL" id="CP001056">
    <property type="protein sequence ID" value="ACD23621.1"/>
    <property type="molecule type" value="Genomic_DNA"/>
</dbReference>
<dbReference type="SMR" id="B2TJ26"/>
<dbReference type="KEGG" id="cbk:CLL_A1244"/>
<dbReference type="HOGENOM" id="CLU_129218_0_1_9"/>
<dbReference type="Proteomes" id="UP000001195">
    <property type="component" value="Chromosome"/>
</dbReference>
<dbReference type="Gene3D" id="1.10.10.10">
    <property type="entry name" value="Winged helix-like DNA-binding domain superfamily/Winged helix DNA-binding domain"/>
    <property type="match status" value="1"/>
</dbReference>
<dbReference type="HAMAP" id="MF_00245">
    <property type="entry name" value="UPF0122"/>
    <property type="match status" value="1"/>
</dbReference>
<dbReference type="InterPro" id="IPR013324">
    <property type="entry name" value="RNA_pol_sigma_r3/r4-like"/>
</dbReference>
<dbReference type="InterPro" id="IPR007394">
    <property type="entry name" value="UPF0122"/>
</dbReference>
<dbReference type="InterPro" id="IPR054831">
    <property type="entry name" value="UPF0122_fam_protein"/>
</dbReference>
<dbReference type="InterPro" id="IPR036388">
    <property type="entry name" value="WH-like_DNA-bd_sf"/>
</dbReference>
<dbReference type="NCBIfam" id="NF001072">
    <property type="entry name" value="PRK00118.2-2"/>
    <property type="match status" value="1"/>
</dbReference>
<dbReference type="NCBIfam" id="NF045758">
    <property type="entry name" value="YlxM"/>
    <property type="match status" value="1"/>
</dbReference>
<dbReference type="PANTHER" id="PTHR40083">
    <property type="entry name" value="UPF0122 PROTEIN CBO2450/CLC_2298"/>
    <property type="match status" value="1"/>
</dbReference>
<dbReference type="PANTHER" id="PTHR40083:SF1">
    <property type="entry name" value="UPF0122 PROTEIN YLXM"/>
    <property type="match status" value="1"/>
</dbReference>
<dbReference type="Pfam" id="PF04297">
    <property type="entry name" value="UPF0122"/>
    <property type="match status" value="1"/>
</dbReference>
<dbReference type="SUPFAM" id="SSF88659">
    <property type="entry name" value="Sigma3 and sigma4 domains of RNA polymerase sigma factors"/>
    <property type="match status" value="1"/>
</dbReference>
<evidence type="ECO:0000255" key="1">
    <source>
        <dbReference type="HAMAP-Rule" id="MF_00245"/>
    </source>
</evidence>
<gene>
    <name type="ordered locus">CLL_A1244</name>
</gene>
<comment type="function">
    <text evidence="1">Might take part in the signal recognition particle (SRP) pathway. This is inferred from the conservation of its genetic proximity to ftsY/ffh. May be a regulatory protein.</text>
</comment>
<comment type="similarity">
    <text evidence="1">Belongs to the UPF0122 family.</text>
</comment>
<accession>B2TJ26</accession>
<feature type="chain" id="PRO_1000100809" description="UPF0122 protein CLL_A1244">
    <location>
        <begin position="1"/>
        <end position="109"/>
    </location>
</feature>